<gene>
    <name type="primary">incenp-a</name>
</gene>
<dbReference type="EMBL" id="U95094">
    <property type="protein sequence ID" value="AAC60120.1"/>
    <property type="molecule type" value="mRNA"/>
</dbReference>
<dbReference type="EMBL" id="BC044958">
    <property type="protein sequence ID" value="AAH44958.1"/>
    <property type="molecule type" value="mRNA"/>
</dbReference>
<dbReference type="EMBL" id="BC097506">
    <property type="protein sequence ID" value="AAH97506.1"/>
    <property type="molecule type" value="mRNA"/>
</dbReference>
<dbReference type="RefSeq" id="NP_001081890.1">
    <property type="nucleotide sequence ID" value="NM_001088421.1"/>
</dbReference>
<dbReference type="PDB" id="2BFX">
    <property type="method" value="X-ray"/>
    <property type="resolution" value="1.80 A"/>
    <property type="chains" value="C/D=798-840"/>
</dbReference>
<dbReference type="PDB" id="2BFY">
    <property type="method" value="X-ray"/>
    <property type="resolution" value="1.80 A"/>
    <property type="chains" value="C/D=798-840"/>
</dbReference>
<dbReference type="PDB" id="2VGO">
    <property type="method" value="X-ray"/>
    <property type="resolution" value="1.70 A"/>
    <property type="chains" value="C/D=797-840"/>
</dbReference>
<dbReference type="PDB" id="2VGP">
    <property type="method" value="X-ray"/>
    <property type="resolution" value="1.70 A"/>
    <property type="chains" value="C/D=798-840"/>
</dbReference>
<dbReference type="PDB" id="2VRX">
    <property type="method" value="X-ray"/>
    <property type="resolution" value="1.86 A"/>
    <property type="chains" value="C/D=798-840"/>
</dbReference>
<dbReference type="PDB" id="3ZTX">
    <property type="method" value="X-ray"/>
    <property type="resolution" value="1.95 A"/>
    <property type="chains" value="C/D=797-840"/>
</dbReference>
<dbReference type="PDB" id="4B8L">
    <property type="method" value="X-ray"/>
    <property type="resolution" value="3.00 A"/>
    <property type="chains" value="D=797-840"/>
</dbReference>
<dbReference type="PDB" id="4B8M">
    <property type="method" value="X-ray"/>
    <property type="resolution" value="1.85 A"/>
    <property type="chains" value="C/D=797-840"/>
</dbReference>
<dbReference type="PDB" id="4C2V">
    <property type="method" value="X-ray"/>
    <property type="resolution" value="1.49 A"/>
    <property type="chains" value="C/D=797-840"/>
</dbReference>
<dbReference type="PDB" id="4C2W">
    <property type="method" value="X-ray"/>
    <property type="resolution" value="1.70 A"/>
    <property type="chains" value="C/D=797-847"/>
</dbReference>
<dbReference type="PDB" id="5EYK">
    <property type="method" value="X-ray"/>
    <property type="resolution" value="1.93 A"/>
    <property type="chains" value="C/D=790-847"/>
</dbReference>
<dbReference type="PDB" id="5K3Y">
    <property type="method" value="X-ray"/>
    <property type="resolution" value="1.60 A"/>
    <property type="chains" value="C/D=790-847"/>
</dbReference>
<dbReference type="PDBsum" id="2BFX"/>
<dbReference type="PDBsum" id="2BFY"/>
<dbReference type="PDBsum" id="2VGO"/>
<dbReference type="PDBsum" id="2VGP"/>
<dbReference type="PDBsum" id="2VRX"/>
<dbReference type="PDBsum" id="3ZTX"/>
<dbReference type="PDBsum" id="4B8L"/>
<dbReference type="PDBsum" id="4B8M"/>
<dbReference type="PDBsum" id="4C2V"/>
<dbReference type="PDBsum" id="4C2W"/>
<dbReference type="PDBsum" id="5EYK"/>
<dbReference type="PDBsum" id="5K3Y"/>
<dbReference type="SMR" id="O13024"/>
<dbReference type="BioGRID" id="99440">
    <property type="interactions" value="11"/>
</dbReference>
<dbReference type="IntAct" id="O13024">
    <property type="interactions" value="2"/>
</dbReference>
<dbReference type="iPTMnet" id="O13024"/>
<dbReference type="DNASU" id="398105"/>
<dbReference type="GeneID" id="398105"/>
<dbReference type="KEGG" id="xla:398105"/>
<dbReference type="AGR" id="Xenbase:XB-GENE-6251940"/>
<dbReference type="CTD" id="398105"/>
<dbReference type="Xenbase" id="XB-GENE-6251940">
    <property type="gene designation" value="incenp.L"/>
</dbReference>
<dbReference type="OrthoDB" id="6123at2759"/>
<dbReference type="CD-CODE" id="3F4CB227">
    <property type="entry name" value="Synthetic Condensate 000322"/>
</dbReference>
<dbReference type="CD-CODE" id="45F3D8EC">
    <property type="entry name" value="Synthetic Condensate 000342"/>
</dbReference>
<dbReference type="CD-CODE" id="7230F6EA">
    <property type="entry name" value="Synthetic Condensate 000328"/>
</dbReference>
<dbReference type="EvolutionaryTrace" id="O13024"/>
<dbReference type="Proteomes" id="UP000186698">
    <property type="component" value="Chromosome 4L"/>
</dbReference>
<dbReference type="GO" id="GO:0005694">
    <property type="term" value="C:chromosome"/>
    <property type="evidence" value="ECO:0000314"/>
    <property type="project" value="UniProtKB"/>
</dbReference>
<dbReference type="GO" id="GO:0032133">
    <property type="term" value="C:chromosome passenger complex"/>
    <property type="evidence" value="ECO:0000353"/>
    <property type="project" value="UniProtKB"/>
</dbReference>
<dbReference type="GO" id="GO:0000775">
    <property type="term" value="C:chromosome, centromeric region"/>
    <property type="evidence" value="ECO:0000250"/>
    <property type="project" value="UniProtKB"/>
</dbReference>
<dbReference type="GO" id="GO:0005737">
    <property type="term" value="C:cytoplasm"/>
    <property type="evidence" value="ECO:0007669"/>
    <property type="project" value="UniProtKB-KW"/>
</dbReference>
<dbReference type="GO" id="GO:0000776">
    <property type="term" value="C:kinetochore"/>
    <property type="evidence" value="ECO:0000318"/>
    <property type="project" value="GO_Central"/>
</dbReference>
<dbReference type="GO" id="GO:1990385">
    <property type="term" value="C:meiotic spindle midzone"/>
    <property type="evidence" value="ECO:0000318"/>
    <property type="project" value="GO_Central"/>
</dbReference>
<dbReference type="GO" id="GO:0005874">
    <property type="term" value="C:microtubule"/>
    <property type="evidence" value="ECO:0007669"/>
    <property type="project" value="UniProtKB-KW"/>
</dbReference>
<dbReference type="GO" id="GO:0030496">
    <property type="term" value="C:midbody"/>
    <property type="evidence" value="ECO:0000318"/>
    <property type="project" value="GO_Central"/>
</dbReference>
<dbReference type="GO" id="GO:0005634">
    <property type="term" value="C:nucleus"/>
    <property type="evidence" value="ECO:0000318"/>
    <property type="project" value="GO_Central"/>
</dbReference>
<dbReference type="GO" id="GO:0005721">
    <property type="term" value="C:pericentric heterochromatin"/>
    <property type="evidence" value="ECO:0000250"/>
    <property type="project" value="UniProtKB"/>
</dbReference>
<dbReference type="GO" id="GO:0005819">
    <property type="term" value="C:spindle"/>
    <property type="evidence" value="ECO:0000250"/>
    <property type="project" value="UniProtKB"/>
</dbReference>
<dbReference type="GO" id="GO:0019901">
    <property type="term" value="F:protein kinase binding"/>
    <property type="evidence" value="ECO:0000353"/>
    <property type="project" value="UniProtKB"/>
</dbReference>
<dbReference type="GO" id="GO:0007059">
    <property type="term" value="P:chromosome segregation"/>
    <property type="evidence" value="ECO:0000250"/>
    <property type="project" value="UniProtKB"/>
</dbReference>
<dbReference type="GO" id="GO:0051257">
    <property type="term" value="P:meiotic spindle midzone assembly"/>
    <property type="evidence" value="ECO:0000318"/>
    <property type="project" value="GO_Central"/>
</dbReference>
<dbReference type="GO" id="GO:0051310">
    <property type="term" value="P:metaphase chromosome alignment"/>
    <property type="evidence" value="ECO:0000318"/>
    <property type="project" value="GO_Central"/>
</dbReference>
<dbReference type="GO" id="GO:0000281">
    <property type="term" value="P:mitotic cytokinesis"/>
    <property type="evidence" value="ECO:0000250"/>
    <property type="project" value="UniProtKB"/>
</dbReference>
<dbReference type="GO" id="GO:0051225">
    <property type="term" value="P:spindle assembly"/>
    <property type="evidence" value="ECO:0000315"/>
    <property type="project" value="UniProtKB"/>
</dbReference>
<dbReference type="FunFam" id="1.20.5.3600:FF:000001">
    <property type="entry name" value="inner centromere protein-like"/>
    <property type="match status" value="1"/>
</dbReference>
<dbReference type="Gene3D" id="1.20.5.3600">
    <property type="match status" value="1"/>
</dbReference>
<dbReference type="Gene3D" id="6.10.250.2990">
    <property type="match status" value="1"/>
</dbReference>
<dbReference type="InterPro" id="IPR022006">
    <property type="entry name" value="INCENP_N"/>
</dbReference>
<dbReference type="InterPro" id="IPR005635">
    <property type="entry name" value="Inner_centromere_prot_ARK-bd"/>
</dbReference>
<dbReference type="PANTHER" id="PTHR13142">
    <property type="entry name" value="INNER CENTROMERE PROTEIN"/>
    <property type="match status" value="1"/>
</dbReference>
<dbReference type="PANTHER" id="PTHR13142:SF1">
    <property type="entry name" value="INNER CENTROMERE PROTEIN"/>
    <property type="match status" value="1"/>
</dbReference>
<dbReference type="Pfam" id="PF03941">
    <property type="entry name" value="INCENP_ARK-bind"/>
    <property type="match status" value="1"/>
</dbReference>
<dbReference type="Pfam" id="PF12178">
    <property type="entry name" value="INCENP_N"/>
    <property type="match status" value="1"/>
</dbReference>
<protein>
    <recommendedName>
        <fullName>Inner centromere protein A</fullName>
        <shortName>XL-INCENP</shortName>
        <shortName>xINC</shortName>
        <shortName>xIncenp</shortName>
    </recommendedName>
    <alternativeName>
        <fullName>Mitotic phosphoprotein 130</fullName>
    </alternativeName>
</protein>
<proteinExistence type="evidence at protein level"/>
<reference key="1">
    <citation type="journal article" date="1997" name="Curr. Biol.">
        <title>Systematic identification of mitotic phosphoproteins.</title>
        <authorList>
            <person name="Stukenberg P.T."/>
            <person name="Lustig K.D."/>
            <person name="McGarry T.J."/>
            <person name="King R.W."/>
            <person name="Kuang J."/>
            <person name="Kirschner M.W."/>
        </authorList>
    </citation>
    <scope>NUCLEOTIDE SEQUENCE [MRNA]</scope>
</reference>
<reference key="2">
    <citation type="submission" date="2005-06" db="EMBL/GenBank/DDBJ databases">
        <authorList>
            <consortium name="NIH - Xenopus Gene Collection (XGC) project"/>
        </authorList>
    </citation>
    <scope>NUCLEOTIDE SEQUENCE [LARGE SCALE MRNA]</scope>
    <source>
        <tissue>Ovary</tissue>
    </source>
</reference>
<reference key="3">
    <citation type="journal article" date="2000" name="Curr. Biol.">
        <title>INCENP binds the Aurora-related kinase AIRK2 and is required to target it to chromosomes, the central spindle and cleavage furrow.</title>
        <authorList>
            <person name="Adams R.R."/>
            <person name="Wheatleya S.P."/>
            <person name="Gouldsworthy A.M."/>
            <person name="Kandels-Lewis S.E."/>
            <person name="Carmena M."/>
            <person name="Smythe C."/>
            <person name="Gerloff D.L."/>
            <person name="Earnshaw W.C."/>
        </authorList>
    </citation>
    <scope>SUBCELLULAR LOCATION</scope>
    <scope>INTERACTION WITH AURKB</scope>
    <scope>DOMAIN</scope>
</reference>
<reference key="4">
    <citation type="journal article" date="2002" name="Genes Dev.">
        <title>Cohesin release is required for sister chromatid resolution, but not for condensin-mediated compaction, at the onset of mitosis.</title>
        <authorList>
            <person name="Losada A."/>
            <person name="Hirano M."/>
            <person name="Hirano T."/>
        </authorList>
    </citation>
    <scope>IDENTIFICATION IN A COMPLEX WITH AURKB AND BIRC5.1</scope>
    <scope>SUBCELLULAR LOCATION</scope>
</reference>
<reference key="5">
    <citation type="journal article" date="2002" name="Mol. Biol. Cell">
        <title>Aurora B kinase exists in a complex with survivin and INCENP and its kinase activity is stimulated by survivin binding and phosphorylation.</title>
        <authorList>
            <person name="Bolton M.A."/>
            <person name="Lan W."/>
            <person name="Powers S.E."/>
            <person name="McCleland M.L."/>
            <person name="Kuang J."/>
            <person name="Stukenberg P.T."/>
        </authorList>
    </citation>
    <scope>FUNCTION</scope>
    <scope>INTERACTION WITH AURKB AND BIRC5.1</scope>
    <scope>IDENTIFICATION IN A COMPLEX WITH AURKB AND BIRC5.1</scope>
</reference>
<reference key="6">
    <citation type="journal article" date="2003" name="Dev. Cell">
        <title>An inner centromere protein that stimulates the microtubule depolymerizing activity of a KinI kinesin.</title>
        <authorList>
            <person name="Ohi R."/>
            <person name="Coughlin M.L."/>
            <person name="Lane W.S."/>
            <person name="Mitchison T.J."/>
        </authorList>
    </citation>
    <scope>INTERACTION WITH MTUS1</scope>
    <scope>IDENTIFICATION BY MASS SPECTROMETRY</scope>
</reference>
<reference key="7">
    <citation type="journal article" date="2004" name="Cell">
        <title>The chromosomal passenger complex is required for chromatin-induced microtubule stabilization and spindle assembly.</title>
        <authorList>
            <person name="Sampath S.C."/>
            <person name="Ohi R."/>
            <person name="Leismann O."/>
            <person name="Salic A."/>
            <person name="Pozniakovski A."/>
            <person name="Funabiki H."/>
        </authorList>
    </citation>
    <scope>IDENTIFICATION IN A COMPLEX WITH BIRC5.1; CDCA9 AND AURKB</scope>
    <scope>IDENTIFICATION IN A COMPLEX WITH CDCA8</scope>
</reference>
<reference key="8">
    <citation type="journal article" date="2005" name="Science">
        <title>Chromosome alignment and segregation regulated by ubiquitination of survivin.</title>
        <authorList>
            <person name="Vong Q.P."/>
            <person name="Cao K."/>
            <person name="Li H.Y."/>
            <person name="Iglesias P.A."/>
            <person name="Zheng Y."/>
        </authorList>
    </citation>
    <scope>IDENTIFICATION IN A COMPLEX WITH AURKB AND BIRC5.1</scope>
</reference>
<reference key="9">
    <citation type="journal article" date="2007" name="Dev. Cell">
        <title>Chromosomal enrichment and activation of the aurora B pathway are coupled to spatially regulate spindle assembly.</title>
        <authorList>
            <person name="Kelly A.E."/>
            <person name="Sampath S.C."/>
            <person name="Maniar T.A."/>
            <person name="Woo E.M."/>
            <person name="Chait B.T."/>
            <person name="Funabiki H."/>
        </authorList>
    </citation>
    <scope>FUNCTION</scope>
    <scope>INTERACTION WITH BIRC5.1; BIRC5.2; CDCA8 AND CDCA9</scope>
    <scope>IDENTIFICATION IN A COMPLEX WITH AURKB; CDCA8; CDCA9; BIRC5.1 AND BIRC5.2</scope>
</reference>
<reference key="10">
    <citation type="journal article" date="2005" name="Mol. Cell">
        <title>Mechanism of Aurora B activation by INCENP and inhibition by hesperadin.</title>
        <authorList>
            <person name="Sessa F."/>
            <person name="Mapelli M."/>
            <person name="Ciferri C."/>
            <person name="Tarricone C."/>
            <person name="Areces L.B."/>
            <person name="Schneider T.R."/>
            <person name="Stukenberg P.T."/>
            <person name="Musacchio A."/>
        </authorList>
    </citation>
    <scope>X-RAY CRYSTALLOGRAPHY (1.8 ANGSTROMS) OF 798-840 IN COMPLEX WITH AURKB-A</scope>
    <scope>PHOSPHORYLATION AT SER-849 AND SER-850</scope>
    <scope>DOMAIN</scope>
    <scope>MUTAGENESIS OF PHE-837</scope>
</reference>
<organism>
    <name type="scientific">Xenopus laevis</name>
    <name type="common">African clawed frog</name>
    <dbReference type="NCBI Taxonomy" id="8355"/>
    <lineage>
        <taxon>Eukaryota</taxon>
        <taxon>Metazoa</taxon>
        <taxon>Chordata</taxon>
        <taxon>Craniata</taxon>
        <taxon>Vertebrata</taxon>
        <taxon>Euteleostomi</taxon>
        <taxon>Amphibia</taxon>
        <taxon>Batrachia</taxon>
        <taxon>Anura</taxon>
        <taxon>Pipoidea</taxon>
        <taxon>Pipidae</taxon>
        <taxon>Xenopodinae</taxon>
        <taxon>Xenopus</taxon>
        <taxon>Xenopus</taxon>
    </lineage>
</organism>
<name>INCEA_XENLA</name>
<feature type="chain" id="PRO_0000278829" description="Inner centromere protein A">
    <location>
        <begin position="1"/>
        <end position="873"/>
    </location>
</feature>
<feature type="region of interest" description="Disordered" evidence="3">
    <location>
        <begin position="50"/>
        <end position="124"/>
    </location>
</feature>
<feature type="region of interest" description="Disordered" evidence="3">
    <location>
        <begin position="237"/>
        <end position="270"/>
    </location>
</feature>
<feature type="region of interest" description="Disordered" evidence="3">
    <location>
        <begin position="282"/>
        <end position="452"/>
    </location>
</feature>
<feature type="region of interest" description="Disordered" evidence="3">
    <location>
        <begin position="484"/>
        <end position="535"/>
    </location>
</feature>
<feature type="region of interest" description="SAH" evidence="1">
    <location>
        <begin position="494"/>
        <end position="707"/>
    </location>
</feature>
<feature type="region of interest" description="Disordered" evidence="3">
    <location>
        <begin position="566"/>
        <end position="649"/>
    </location>
</feature>
<feature type="region of interest" description="Disordered" evidence="3">
    <location>
        <begin position="683"/>
        <end position="736"/>
    </location>
</feature>
<feature type="region of interest" description="Disordered" evidence="3">
    <location>
        <begin position="781"/>
        <end position="800"/>
    </location>
</feature>
<feature type="region of interest" description="IN box" evidence="13">
    <location>
        <begin position="782"/>
        <end position="856"/>
    </location>
</feature>
<feature type="compositionally biased region" description="Basic residues" evidence="3">
    <location>
        <begin position="60"/>
        <end position="69"/>
    </location>
</feature>
<feature type="compositionally biased region" description="Low complexity" evidence="3">
    <location>
        <begin position="87"/>
        <end position="105"/>
    </location>
</feature>
<feature type="compositionally biased region" description="Polar residues" evidence="3">
    <location>
        <begin position="239"/>
        <end position="254"/>
    </location>
</feature>
<feature type="compositionally biased region" description="Basic residues" evidence="3">
    <location>
        <begin position="261"/>
        <end position="270"/>
    </location>
</feature>
<feature type="compositionally biased region" description="Basic and acidic residues" evidence="3">
    <location>
        <begin position="286"/>
        <end position="297"/>
    </location>
</feature>
<feature type="compositionally biased region" description="Low complexity" evidence="3">
    <location>
        <begin position="314"/>
        <end position="325"/>
    </location>
</feature>
<feature type="compositionally biased region" description="Pro residues" evidence="3">
    <location>
        <begin position="437"/>
        <end position="452"/>
    </location>
</feature>
<feature type="compositionally biased region" description="Basic and acidic residues" evidence="3">
    <location>
        <begin position="491"/>
        <end position="535"/>
    </location>
</feature>
<feature type="compositionally biased region" description="Basic and acidic residues" evidence="3">
    <location>
        <begin position="566"/>
        <end position="584"/>
    </location>
</feature>
<feature type="compositionally biased region" description="Basic and acidic residues" evidence="3">
    <location>
        <begin position="591"/>
        <end position="649"/>
    </location>
</feature>
<feature type="compositionally biased region" description="Basic and acidic residues" evidence="3">
    <location>
        <begin position="683"/>
        <end position="733"/>
    </location>
</feature>
<feature type="modified residue" description="Phosphoserine" evidence="9">
    <location>
        <position position="849"/>
    </location>
</feature>
<feature type="modified residue" description="Phosphoserine" evidence="9">
    <location>
        <position position="850"/>
    </location>
</feature>
<feature type="mutagenesis site" description="Disrupts interaction with aurkb-a." evidence="9">
    <original>F</original>
    <variation>A</variation>
    <location>
        <position position="837"/>
    </location>
</feature>
<feature type="sequence conflict" description="In Ref. 2; AAH97506." evidence="12" ref="2">
    <original>T</original>
    <variation>K</variation>
    <location>
        <position position="140"/>
    </location>
</feature>
<feature type="sequence conflict" description="In Ref. 2; AAH97506." evidence="12" ref="2">
    <original>R</original>
    <variation>C</variation>
    <location>
        <position position="163"/>
    </location>
</feature>
<feature type="sequence conflict" description="In Ref. 2; AAH44958." evidence="12" ref="2">
    <location>
        <begin position="495"/>
        <end position="496"/>
    </location>
</feature>
<feature type="sequence conflict" description="In Ref. 2; AAH44958." evidence="12" ref="2">
    <original>M</original>
    <variation>K</variation>
    <location>
        <position position="588"/>
    </location>
</feature>
<feature type="sequence conflict" description="In Ref. 2; AAH97506." evidence="12" ref="2">
    <original>A</original>
    <variation>T</variation>
    <location>
        <position position="720"/>
    </location>
</feature>
<feature type="helix" evidence="14">
    <location>
        <begin position="800"/>
        <end position="802"/>
    </location>
</feature>
<feature type="helix" evidence="14">
    <location>
        <begin position="804"/>
        <end position="816"/>
    </location>
</feature>
<feature type="helix" evidence="14">
    <location>
        <begin position="821"/>
        <end position="824"/>
    </location>
</feature>
<feature type="turn" evidence="14">
    <location>
        <begin position="825"/>
        <end position="827"/>
    </location>
</feature>
<feature type="helix" evidence="14">
    <location>
        <begin position="833"/>
        <end position="836"/>
    </location>
</feature>
<keyword id="KW-0002">3D-structure</keyword>
<keyword id="KW-0131">Cell cycle</keyword>
<keyword id="KW-0132">Cell division</keyword>
<keyword id="KW-0137">Centromere</keyword>
<keyword id="KW-0158">Chromosome</keyword>
<keyword id="KW-0159">Chromosome partition</keyword>
<keyword id="KW-0963">Cytoplasm</keyword>
<keyword id="KW-0206">Cytoskeleton</keyword>
<keyword id="KW-0995">Kinetochore</keyword>
<keyword id="KW-0493">Microtubule</keyword>
<keyword id="KW-0498">Mitosis</keyword>
<keyword id="KW-0539">Nucleus</keyword>
<keyword id="KW-0597">Phosphoprotein</keyword>
<keyword id="KW-1185">Reference proteome</keyword>
<evidence type="ECO:0000250" key="1">
    <source>
        <dbReference type="UniProtKB" id="P53352"/>
    </source>
</evidence>
<evidence type="ECO:0000250" key="2">
    <source>
        <dbReference type="UniProtKB" id="Q9NQS7"/>
    </source>
</evidence>
<evidence type="ECO:0000256" key="3">
    <source>
        <dbReference type="SAM" id="MobiDB-lite"/>
    </source>
</evidence>
<evidence type="ECO:0000269" key="4">
    <source>
    </source>
</evidence>
<evidence type="ECO:0000269" key="5">
    <source>
    </source>
</evidence>
<evidence type="ECO:0000269" key="6">
    <source>
    </source>
</evidence>
<evidence type="ECO:0000269" key="7">
    <source>
    </source>
</evidence>
<evidence type="ECO:0000269" key="8">
    <source>
    </source>
</evidence>
<evidence type="ECO:0000269" key="9">
    <source>
    </source>
</evidence>
<evidence type="ECO:0000269" key="10">
    <source>
    </source>
</evidence>
<evidence type="ECO:0000269" key="11">
    <source>
    </source>
</evidence>
<evidence type="ECO:0000305" key="12"/>
<evidence type="ECO:0000305" key="13">
    <source>
    </source>
</evidence>
<evidence type="ECO:0007829" key="14">
    <source>
        <dbReference type="PDB" id="4C2V"/>
    </source>
</evidence>
<comment type="function">
    <text evidence="1 5 11">Component of the chromosomal passenger complex (CPC), a complex that acts as a key regulator of mitosis. The CPC complex has essential functions at the centromere in ensuring correct chromosome alignment and segregation and is required for chromatin-induced microtubule stabilization and spindle assembly. Acts as a scaffold regulating CPC localization and activity. The C-terminus associates with aurkb/aurora-B, the N-terminus associated with cdca8/borealin and/or cdca9/dasra-A tethers the CPC to the inner centromere, and the microtubule binding activity within the central SAH domain directs aurkb/aurora-B toward substrates near microtubules. Activates aurkb.</text>
</comment>
<comment type="subunit">
    <text evidence="4 5 6 7 8 9 10 11 12">Component of the CPC composed of survivin/birc5, incenp, cdca8/borealin and/or cdca9/dasra-A, and aurkb/aurora-B. Interacts (via C-terminus) with aurkb (via N-terminus and kinase domain). Interacts (via N-terminus) with birc5.1, birc5.2, cdca8 and cdca9. Interacts with mtus1.</text>
</comment>
<comment type="interaction">
    <interactant intactId="EBI-1042275">
        <id>O13024</id>
    </interactant>
    <interactant intactId="EBI-1042262">
        <id>Q6DE08</id>
        <label>aurkb-a</label>
    </interactant>
    <organismsDiffer>false</organismsDiffer>
    <experiments>2</experiments>
</comment>
<comment type="subcellular location">
    <subcellularLocation>
        <location evidence="2">Nucleus</location>
    </subcellularLocation>
    <subcellularLocation>
        <location evidence="6">Chromosome</location>
    </subcellularLocation>
    <subcellularLocation>
        <location evidence="4">Chromosome</location>
        <location evidence="4">Centromere</location>
    </subcellularLocation>
    <subcellularLocation>
        <location evidence="4">Cytoplasm</location>
        <location evidence="4">Cytoskeleton</location>
        <location evidence="4">Spindle</location>
    </subcellularLocation>
    <subcellularLocation>
        <location evidence="2">Midbody</location>
    </subcellularLocation>
    <subcellularLocation>
        <location evidence="2">Chromosome</location>
        <location evidence="2">Centromere</location>
        <location evidence="2">Kinetochore</location>
    </subcellularLocation>
    <text evidence="4">Localizes on chromosome arms and inner centromeres from prophase through metaphase and then transferring to the spindle midzone and midbody from anaphase through cytokinesis (PubMed:10996078). Colocalizes to the equatorial cell cortex at anaphase (PubMed:10996078). Colocalizes with AURKB at mitotic chromosomes (PubMed:10996078).</text>
</comment>
<comment type="domain">
    <text evidence="9">The IN box mediates interaction with aurkb/aurora-B.</text>
</comment>
<comment type="domain">
    <text evidence="1">The SAH (single alpha-helix) region is characterized by a high content of charged residues which are predicted to stabilize the alpha-helical structure by ionic bonds. It can refold after extension suggesting an in vivo force-dependent function. The isolated SAH domain is monomeric.</text>
</comment>
<comment type="similarity">
    <text evidence="12">Belongs to the INCENP family.</text>
</comment>
<comment type="caution">
    <text evidence="1">Originally predicted to contain a coiled coil domain but shown to contain a stable SAH domain instead.</text>
</comment>
<accession>O13024</accession>
<accession>Q4V878</accession>
<accession>Q7ZXJ9</accession>
<sequence>MNDAECLSHLLQVCARKTEEFVRTLDSKHMVWLLEIEEEARKMFSSDFNAEPELMPKTPSQKRRRKKRTSILPDENRDPSGRRISRRQSNASWSSSVRRLSVRNQNKANDDSIQEEPAQLKRMTRARAQASIKSTPVLETALPESPSQICQKNAQVKISEQERRSAEQKLIESDFELKTVPEITKDNVSETVNSAVPAVPVTPENKSRAAGKLKIAASSTPEQKAEMVDLTCESPRPANEQQLNLSNQSATPTGSKSDRRSVRRSLVVRKSSSRRASLASQFSLASKRESMTREAVRKSIRQSISQKKAAMEISSTSSQRSYQSSIEMVDDEITIKIRPETVPSETVSEEAPAAESPRRSLRSRAFKKIAISNLPDSEEPPRKVTRQMVAGNAEPTPETTEDAQNIRRKSYKRAVDELSDDERPSEEERSPPRKKTPSPPCPPSKIVRPPPHMKSFLHTVQKNQLLMMTPGSIGKNIIMKSFIKRNTPLKTDPKTEEKERQRLDALRKKEEAELQRKQKIEEGKKRKQEELKVRREERLRKVLQARERVEQLEEEKKKKIEQKFAQIDEKSEKVREDRMAEEKAKKKMTAKKQEEVECRRKQEEEARRLKVKQMEEEERRHQELLQKKREEEELERQKKIAEAKRLAEQERERQLLAEKERLRAEREKERIEKEKALQLQRELERAAQEKEQQRREAEERKKREQQERLEQERLRKEQEAKRLQEEEQRKAKEQAAVAASAPVMNVTVDMQNSPACESYEMTPKSCKVPSVKVNEDNYGMDLNSDDSTDDESQPRKPIPAWASGNLLTQAIRQQYYKPIDVDRMYGTIDSPKLEELFNKSKPRYFKRTSSAVWHSPPLSSNRHHLAVGYGLKY</sequence>